<keyword id="KW-0134">Cell wall</keyword>
<keyword id="KW-1015">Disulfide bond</keyword>
<keyword id="KW-0293">Fruiting body</keyword>
<keyword id="KW-0964">Secreted</keyword>
<keyword id="KW-0732">Signal</keyword>
<evidence type="ECO:0000250" key="1">
    <source>
        <dbReference type="UniProtKB" id="P16933"/>
    </source>
</evidence>
<evidence type="ECO:0000255" key="2"/>
<evidence type="ECO:0000269" key="3">
    <source>
    </source>
</evidence>
<evidence type="ECO:0000269" key="4">
    <source>
    </source>
</evidence>
<evidence type="ECO:0000269" key="5">
    <source>
    </source>
</evidence>
<evidence type="ECO:0000269" key="6">
    <source>
    </source>
</evidence>
<evidence type="ECO:0000303" key="7">
    <source>
    </source>
</evidence>
<evidence type="ECO:0000305" key="8"/>
<dbReference type="EMBL" id="X00788">
    <property type="protein sequence ID" value="CAA25366.1"/>
    <property type="status" value="ALT_SEQ"/>
    <property type="molecule type" value="Genomic_DNA"/>
</dbReference>
<dbReference type="PIR" id="A04506">
    <property type="entry name" value="COSJS"/>
</dbReference>
<dbReference type="PIR" id="JU0321">
    <property type="entry name" value="JU0321"/>
</dbReference>
<dbReference type="SMR" id="P04158"/>
<dbReference type="VEuPathDB" id="FungiDB:SCHCODRAFT_01374227"/>
<dbReference type="OMA" id="VGEIHCC"/>
<dbReference type="GO" id="GO:0005576">
    <property type="term" value="C:extracellular region"/>
    <property type="evidence" value="ECO:0007669"/>
    <property type="project" value="UniProtKB-SubCell"/>
</dbReference>
<dbReference type="GO" id="GO:0009277">
    <property type="term" value="C:fungal-type cell wall"/>
    <property type="evidence" value="ECO:0007669"/>
    <property type="project" value="InterPro"/>
</dbReference>
<dbReference type="GO" id="GO:0005199">
    <property type="term" value="F:structural constituent of cell wall"/>
    <property type="evidence" value="ECO:0007669"/>
    <property type="project" value="InterPro"/>
</dbReference>
<dbReference type="CDD" id="cd23507">
    <property type="entry name" value="hydrophobin_I"/>
    <property type="match status" value="1"/>
</dbReference>
<dbReference type="InterPro" id="IPR001338">
    <property type="entry name" value="Hydrophobin"/>
</dbReference>
<dbReference type="InterPro" id="IPR019778">
    <property type="entry name" value="Hydrophobin_CS"/>
</dbReference>
<dbReference type="Pfam" id="PF01185">
    <property type="entry name" value="Hydrophobin"/>
    <property type="match status" value="1"/>
</dbReference>
<dbReference type="SMART" id="SM00075">
    <property type="entry name" value="HYDRO"/>
    <property type="match status" value="1"/>
</dbReference>
<dbReference type="PROSITE" id="PS00956">
    <property type="entry name" value="HYDROPHOBIN"/>
    <property type="match status" value="1"/>
</dbReference>
<sequence length="109" mass="10803">MRFSLAILALPVLAAATAVPRGGASKCNSGPVQCCNTLVDTKDKHQTNIVGALLGLDLGSLTGLAGVNCSPVSVIGVGGNSCSTQTVCCEGTQFNGLVNVGCTPINVGL</sequence>
<accession>P04158</accession>
<gene>
    <name evidence="7" type="primary">SC1</name>
    <name type="synonym">1G2</name>
</gene>
<name>SC1_SCHCO</name>
<protein>
    <recommendedName>
        <fullName evidence="7">Class I hydrophobin SC1</fullName>
    </recommendedName>
    <alternativeName>
        <fullName evidence="7">Fruiting body protein SC1</fullName>
    </alternativeName>
</protein>
<comment type="function">
    <text evidence="3 8">Aerial growth, conidiation, and dispersal of filamentous fungi in the environment rely upon a capability of their secreting small amphipathic proteins called hydrophobins (HPBs) with low sequence identity. Class I can self-assemble into an outermost layer of rodlet bundles on aerial cell surfaces, conferring cellular hydrophobicity that supports fungal growth, development and dispersal; whereas Class II form highly ordered films at water-air interfaces through intermolecular interactions but contribute nothing to the rodlet structure (Probable). SC1 is a dikaryon-specific class I hydrophobin that contributes to the formation of aerial hyphae and fruiting bodies (PubMed:12324614).</text>
</comment>
<comment type="subunit">
    <text evidence="1">Self-assembles to form functional amyloid fibrils called rodlets. Self-assembly into fibrillar rodlets occurs spontaneously at hydrophobic:hydrophilic interfaces and the rodlets further associate laterally to form amphipathic monolayers.</text>
</comment>
<comment type="subcellular location">
    <subcellularLocation>
        <location evidence="1">Secreted</location>
    </subcellularLocation>
    <subcellularLocation>
        <location evidence="1">Secreted</location>
        <location evidence="1">Cell wall</location>
    </subcellularLocation>
</comment>
<comment type="developmental stage">
    <text evidence="4 5">Is abundantly expressed and accumulates in the walls of developing fruiting bodies (only in fruiting dikaryons).</text>
</comment>
<comment type="induction">
    <text evidence="6">Expression is regulated by the mating-type genes in the secondary mycelium, and especially activated by both the MATA- and MATB-controlled pathways.</text>
</comment>
<comment type="similarity">
    <text evidence="8">Belongs to the fungal hydrophobin family.</text>
</comment>
<comment type="sequence caution" evidence="8">
    <conflict type="miscellaneous discrepancy">
        <sequence resource="EMBL-CDS" id="CAA25366"/>
    </conflict>
</comment>
<feature type="signal peptide" evidence="2">
    <location>
        <begin position="1"/>
        <end position="22"/>
    </location>
</feature>
<feature type="chain" id="PRO_0000013512" description="Class I hydrophobin SC1">
    <location>
        <begin position="23"/>
        <end position="109"/>
    </location>
</feature>
<feature type="disulfide bond" evidence="1">
    <location>
        <begin position="27"/>
        <end position="88"/>
    </location>
</feature>
<feature type="disulfide bond" evidence="1">
    <location>
        <begin position="34"/>
        <end position="82"/>
    </location>
</feature>
<feature type="disulfide bond" evidence="1">
    <location>
        <begin position="35"/>
        <end position="69"/>
    </location>
</feature>
<feature type="disulfide bond" evidence="1">
    <location>
        <begin position="89"/>
        <end position="102"/>
    </location>
</feature>
<proteinExistence type="evidence at transcript level"/>
<organism>
    <name type="scientific">Schizophyllum commune</name>
    <name type="common">Split gill fungus</name>
    <dbReference type="NCBI Taxonomy" id="5334"/>
    <lineage>
        <taxon>Eukaryota</taxon>
        <taxon>Fungi</taxon>
        <taxon>Dikarya</taxon>
        <taxon>Basidiomycota</taxon>
        <taxon>Agaricomycotina</taxon>
        <taxon>Agaricomycetes</taxon>
        <taxon>Agaricomycetidae</taxon>
        <taxon>Agaricales</taxon>
        <taxon>Schizophyllaceae</taxon>
        <taxon>Schizophyllum</taxon>
    </lineage>
</organism>
<reference key="1">
    <citation type="journal article" date="1984" name="EMBO J.">
        <title>Sequence analysis of a split gene involved in fruiting from the fungus Schizophyllum commune.</title>
        <authorList>
            <person name="Dons J.J.M."/>
            <person name="Mulder G.H."/>
            <person name="Rouwendal G.J.A."/>
            <person name="Springer J."/>
            <person name="Bremer W."/>
            <person name="Wessels J.G.H."/>
        </authorList>
    </citation>
    <scope>NUCLEOTIDE SEQUENCE [GENOMIC DNA]</scope>
    <scope>DEVELOPMENTAL STAGE</scope>
</reference>
<reference key="2">
    <citation type="journal article" date="1990" name="Gene">
        <title>Two genes specifically expressed in fruiting dikaryons of Schizophyllum commune: homologies with a gene not regulated by mating-type genes.</title>
        <authorList>
            <person name="Schuren F.H.J."/>
            <person name="Wessels J.G.H."/>
        </authorList>
    </citation>
    <scope>SEQUENCE REVISION</scope>
    <scope>DEVELOPMENTAL STAGE</scope>
</reference>
<reference key="3">
    <citation type="journal article" date="1991" name="Plant Cell">
        <title>Hydrophobin Genes Involved in Formation of Aerial Hyphae and Fruit Bodies in Schizophyllum.</title>
        <authorList>
            <person name="Wessels J."/>
            <person name="De Vries O."/>
            <person name="Asgeirsdottir S.A."/>
            <person name="Schuren F."/>
        </authorList>
    </citation>
    <scope>FUNCTION</scope>
</reference>
<reference key="4">
    <citation type="journal article" date="1995" name="Microbiology">
        <title>Differential expression of genes under control of the mating-type genes in the secondary mycelium of Schizophyllum commune.</title>
        <authorList>
            <person name="Asgeirsdottir S.A."/>
            <person name="van Wetter Marianne A."/>
            <person name="Wesselsd J.G.H."/>
        </authorList>
    </citation>
    <scope>INDUCTION</scope>
</reference>